<gene>
    <name evidence="16" type="primary">ACE</name>
    <name type="synonym">DCP1</name>
</gene>
<accession>P12822</accession>
<accession>O02852</accession>
<accession>P22968</accession>
<sequence length="1310" mass="150406">MGAAPGRRGPRLLRPPPPLLLLLLLLRPPPAALTLDPGLLPGDFAADEAGARLFASSYNSSAEQVLFRSTAASWAHDTNITAENARRQEEEALLSQEFAEAWGKKAKELYDPVWQNFTDPELRRIIGAVRTLGPANLPLAKRQQYNSLLSNMSQIYSTGKVCFPNKTASCWSLDPDLNNILASSRSYAMLLFAWEGWHNAVGIPLKPLYQEFTALSNEAYRQDGFSDTGAYWRSWYDSPTFEEDLERIYHQLEPLYLNLHAYVRRVLHRRYGDRYINLRGPIPAHLLGNMWAQSWESIYDMVVPFPDKPNLDVTSTMVQKGWNATHMFRVAEEFFTSLGLLPMPPEFWAESMLEKPEDGREVVCHASAWDFYNRKDFRIKQCTQVTMDQLSTVHHEMGHVQYYLQYKDQPVSLRRANPGFHEAIGDVLALSVSTPAHLHKIGLLDHVTNDTESDINYLLKMALEKIAFLPFGYLVDQWRWGVFSGRTPSSRYNFDWWYLRTKYQGICPPVVRNETHFDAGAKFHIPSVTPYIRYFVSFVLQFQFHQALCMEAGHQGPLHQCDIYQSTRAGAKLRAVLQAGCSRPWQEVLKDMVASDALDAQPLLDYFQPVTQWLQEQNERNGEVLGWPEYQWRPPLPNNYPEGIDLVTDEAEASRFVEEYDRSFQAVWNEYAEANWNYNTNITTEASKILLQKNMQIANHTLTYGNWARRFDVSNFQNATSKRIIKKVQDLQRAVLPVKELEEYNQILLDMETIYSVANVCRVDGSCLQLEPDLTNLMATSRKYDELLWVWTSWRDKVGRAILPYFPKYVEFTNKAARLNGYVDAGDSWRSMYETPTLEQDLERLFQELQPLYLNLHAYVGRALHRHYGAQHINLEGPIPAHLLGNMWAQTWSNIYDLVAPFPSASTMDATEAMIKQGWTPRRMFEEADKFFISLGLLPVPPEFWNKSMLEKPTDGREVVCHASAWDFYNGKDFRIKQCTTVNMEDLVVVHHEMGHIQYFMQYKDLPVALREGANPGFHEAIGDVLALSVSTPKHLHSINLLSSEGGGYEHDINFLMKMALDKIAFIPFSYLVDEWRWRVFDGSITKENYNQEWWSLRLKYQGLCPPAPRSQGDFDPGAKFHIPSSVPYIRYFVSFIIQFQFHEALCKAAGHTGPLHTCDIYQSKEAGKRLADAMKLGYSKPWPEAMKVITGQPNMSASAMMNYFKPLMDWLLTENGRHGEKLGWPQYTWTPNSARSEGSLPDSGRVNFLGMNLDAQQARVGQWVLLFLGVALLLASLGLTQRLFSIRYQSLRQPHHGPQFGSEVELRHS</sequence>
<organism>
    <name type="scientific">Oryctolagus cuniculus</name>
    <name type="common">Rabbit</name>
    <dbReference type="NCBI Taxonomy" id="9986"/>
    <lineage>
        <taxon>Eukaryota</taxon>
        <taxon>Metazoa</taxon>
        <taxon>Chordata</taxon>
        <taxon>Craniata</taxon>
        <taxon>Vertebrata</taxon>
        <taxon>Euteleostomi</taxon>
        <taxon>Mammalia</taxon>
        <taxon>Eutheria</taxon>
        <taxon>Euarchontoglires</taxon>
        <taxon>Glires</taxon>
        <taxon>Lagomorpha</taxon>
        <taxon>Leporidae</taxon>
        <taxon>Oryctolagus</taxon>
    </lineage>
</organism>
<proteinExistence type="evidence at protein level"/>
<reference key="1">
    <citation type="journal article" date="1992" name="Nucleic Acids Res.">
        <title>Use of alternative polyadenylation sites for tissue-specific transcription of two angiotensin-converting enzyme mRNAs.</title>
        <authorList>
            <person name="Thekkumkara T.J."/>
            <person name="Livingston W. III"/>
            <person name="Kumar R.S."/>
            <person name="Sen G.C."/>
        </authorList>
    </citation>
    <scope>NUCLEOTIDE SEQUENCE [MRNA] (ISOFORM SOMATIC)</scope>
    <source>
        <tissue>Lung</tissue>
    </source>
</reference>
<reference key="2">
    <citation type="submission" date="1997-03" db="EMBL/GenBank/DDBJ databases">
        <authorList>
            <person name="Sen G.C."/>
        </authorList>
    </citation>
    <scope>SEQUENCE REVISION</scope>
</reference>
<reference key="3">
    <citation type="journal article" date="1989" name="J. Biol. Chem.">
        <title>Structure of testicular angiotensin-converting enzyme. A segmental mosaic isozyme.</title>
        <authorList>
            <person name="Kumar R.S."/>
            <person name="Kusari J."/>
            <person name="Roy S.N."/>
            <person name="Soffer R.L."/>
            <person name="Sen G.C."/>
        </authorList>
    </citation>
    <scope>NUCLEOTIDE SEQUENCE [MRNA] (ISOFORM TESTIS-SPECIFIC)</scope>
    <scope>TISSUE SPECIFICITY (ISOFORM TESTIS-SPECIFIC)</scope>
    <source>
        <strain>New Zealand white</strain>
        <tissue>Testis</tissue>
    </source>
</reference>
<reference key="4">
    <citation type="journal article" date="1991" name="J. Biol. Chem.">
        <title>The mRNAs encoding the two angiotensin-converting isozymes are transcribed from the same gene by a tissue-specific choice of alternative transcription initiation sites.</title>
        <authorList>
            <person name="Kumar R.S."/>
            <person name="Thekkumkara T.J."/>
            <person name="Sen G.C."/>
        </authorList>
    </citation>
    <scope>NUCLEOTIDE SEQUENCE [GENOMIC DNA] OF 1-88</scope>
    <scope>ALTERNATIVE SPLICING</scope>
    <source>
        <tissue>Liver</tissue>
    </source>
</reference>
<reference key="5">
    <citation type="journal article" date="1982" name="Biochem. Biophys. Res. Commun.">
        <title>The NH2- and COOH-terminal sequences of the angiotensin-converting enzyme isozymes from rabbit lung and testis.</title>
        <authorList>
            <person name="Iwata K."/>
            <person name="Lai C.Y."/>
            <person name="El-Dorry H.A."/>
            <person name="Soffer R.L."/>
        </authorList>
    </citation>
    <scope>PROTEIN SEQUENCE OF 34-44 AND 755-758</scope>
</reference>
<reference key="6">
    <citation type="journal article" date="1983" name="Arch. Biochem. Biophys.">
        <title>Rabbit pulmonary angiotensin-converting enzyme: the NH2-terminal fragment with enzymatic activity and its formation from the native enzyme by NH4OH treatment.</title>
        <authorList>
            <person name="Iwata K."/>
            <person name="Blacher R."/>
            <person name="Soffer R.L."/>
            <person name="Lai C.Y."/>
        </authorList>
    </citation>
    <scope>PROTEIN SEQUENCE OF 34-55</scope>
    <source>
        <tissue>Lung</tissue>
    </source>
</reference>
<reference key="7">
    <citation type="journal article" date="1991" name="Biochem. J.">
        <title>The Mg(2+)-ATPase of rabbit skeletal-muscle transverse tubule is a highly glycosylated multiple-subunit enzyme.</title>
        <authorList>
            <person name="Kirley T.L."/>
        </authorList>
    </citation>
    <scope>PROTEIN SEQUENCE OF 34-55</scope>
    <scope>GLYCOSYLATION</scope>
</reference>
<reference key="8">
    <citation type="journal article" date="1990" name="J. Cardiovasc. Pharmacol.">
        <title>Angiotensin-converting enzyme: structural relationship of the testicular and the pulmonary forms.</title>
        <authorList>
            <person name="Sen G.C."/>
            <person name="Thekkumkara T.J."/>
            <person name="Kumar R.S."/>
        </authorList>
    </citation>
    <scope>NUCLEOTIDE SEQUENCE OF 646-746</scope>
</reference>
<reference key="9">
    <citation type="journal article" date="1990" name="Biochemistry">
        <title>Identification of essential tyrosine and lysine residues in angiotensin converting enzyme: evidence for a single active site.</title>
        <authorList>
            <person name="Chen Y.N."/>
            <person name="Riordan J.F."/>
        </authorList>
    </citation>
    <scope>PROTEIN SEQUENCE OF 727-733 AND 809-815</scope>
</reference>
<reference key="10">
    <citation type="journal article" date="1994" name="J. Biol. Chem.">
        <title>Regulated cleavage-secretion of the membrane-bound angiotensin-converting enzyme.</title>
        <authorList>
            <person name="Ramchandran R."/>
            <person name="Sen G.C."/>
            <person name="Misono K."/>
            <person name="Sen I."/>
        </authorList>
    </citation>
    <scope>PROTEIN SEQUENCE OF 1237-1259</scope>
    <scope>CLEAVAGE SITE</scope>
</reference>
<reference key="11">
    <citation type="journal article" date="1989" name="Biochem. J.">
        <title>Novel activity of angiotensin-converting enzyme. Hydrolysis of cholecystokinin and gastrin analogues with release of the amidated C-terminal dipeptide.</title>
        <authorList>
            <person name="Dubreuil P."/>
            <person name="Fulcrand P."/>
            <person name="Rodriguez M."/>
            <person name="Fulcrand H."/>
            <person name="Laur J."/>
            <person name="Martinez J."/>
        </authorList>
    </citation>
    <scope>FUNCTION</scope>
</reference>
<reference key="12">
    <citation type="journal article" date="1993" name="J. Biol. Chem.">
        <title>Mutations in two specific residues of testicular angiotensin-converting enzyme change its catalytic properties.</title>
        <authorList>
            <person name="Sen I."/>
            <person name="Kasturi S."/>
            <person name="Abdul-Jabbar M."/>
            <person name="Sen G.C."/>
        </authorList>
    </citation>
    <scope>FUNCTION</scope>
    <scope>CATALYTIC ACTIVITY</scope>
    <scope>ACTIVITY REGULATION</scope>
    <scope>BIOPHYSICOCHEMICAL PROPERTIES</scope>
    <scope>MUTAGENESIS OF LYS-727 AND TYR-809</scope>
</reference>
<reference key="13">
    <citation type="journal article" date="1994" name="Proc. Natl. Acad. Sci. U.S.A.">
        <title>Dual inhibition of angiotensin-converting enzyme and neutral endopeptidase by the orally active inhibitor mixanpril: a potential therapeutic approach in hypertension.</title>
        <authorList>
            <person name="Fournie-Zaluski M.C."/>
            <person name="Gonzalez W."/>
            <person name="Turcaud S."/>
            <person name="Pham I."/>
            <person name="Roques B.P."/>
            <person name="Michel J.B."/>
        </authorList>
    </citation>
    <scope>FUNCTION</scope>
    <scope>ACTIVITY REGULATION</scope>
</reference>
<reference key="14">
    <citation type="journal article" date="2004" name="J. Biol. Chem.">
        <title>Role of tyrosine phosphorylation in the regulation of cleavage secretion of angiotensin-converting enzyme.</title>
        <authorList>
            <person name="Santhamma K.R."/>
            <person name="Sadhukhan R."/>
            <person name="Kinter M."/>
            <person name="Chattopadhyay S."/>
            <person name="McCue B."/>
            <person name="Sen I."/>
        </authorList>
    </citation>
    <scope>SUBCELLULAR LOCATION (ANGIOTENSIN-CONVERTING ENZYME</scope>
    <scope>SOLUBLE FORM)</scope>
    <scope>PHOSPHORYLATION</scope>
    <scope>PROTEOLYTIC CLEAVAGE</scope>
</reference>
<reference key="15">
    <citation type="journal article" date="2005" name="J. Biol. Chem.">
        <title>Calmodulin binds to the cytoplasmic domain of angiotensin-converting enzyme and regulates its phosphorylation and cleavage secretion.</title>
        <authorList>
            <person name="Chattopadhyay S."/>
            <person name="Santhamma K.R."/>
            <person name="Sengupta S."/>
            <person name="McCue B."/>
            <person name="Kinter M."/>
            <person name="Sen G.C."/>
            <person name="Sen I."/>
        </authorList>
    </citation>
    <scope>SUBCELLULAR LOCATION (ANGIOTENSIN-CONVERTING ENZYME</scope>
    <scope>SOLUBLE FORM)</scope>
    <scope>INTERACTION WITH CALMODULIN</scope>
    <scope>PHOSPHORYLATION AT SER-1303</scope>
    <scope>PROTEOLYTIC CLEAVAGE</scope>
    <scope>MUTAGENESIS OF SER-1303</scope>
</reference>
<reference key="16">
    <citation type="journal article" date="2005" name="Nat. Med.">
        <title>Angiotensin-converting enzyme as a GPIase: a critical reevaluation.</title>
        <authorList>
            <person name="Leisle L."/>
            <person name="Parkin E.T."/>
            <person name="Turner A.J."/>
            <person name="Hooper N.M."/>
        </authorList>
    </citation>
    <scope>FUNCTION (ISOFORM TESTIS-SPECIFIC)</scope>
</reference>
<keyword id="KW-0877">Alternative promoter usage</keyword>
<keyword id="KW-0112">Calmodulin-binding</keyword>
<keyword id="KW-0121">Carboxypeptidase</keyword>
<keyword id="KW-1003">Cell membrane</keyword>
<keyword id="KW-0963">Cytoplasm</keyword>
<keyword id="KW-0903">Direct protein sequencing</keyword>
<keyword id="KW-1015">Disulfide bond</keyword>
<keyword id="KW-0325">Glycoprotein</keyword>
<keyword id="KW-0378">Hydrolase</keyword>
<keyword id="KW-0472">Membrane</keyword>
<keyword id="KW-0479">Metal-binding</keyword>
<keyword id="KW-0482">Metalloprotease</keyword>
<keyword id="KW-0597">Phosphoprotein</keyword>
<keyword id="KW-0645">Protease</keyword>
<keyword id="KW-1185">Reference proteome</keyword>
<keyword id="KW-0677">Repeat</keyword>
<keyword id="KW-0964">Secreted</keyword>
<keyword id="KW-0732">Signal</keyword>
<keyword id="KW-0812">Transmembrane</keyword>
<keyword id="KW-1133">Transmembrane helix</keyword>
<keyword id="KW-0862">Zinc</keyword>
<feature type="signal peptide" evidence="8 11 12">
    <location>
        <begin position="1"/>
        <end position="33"/>
    </location>
</feature>
<feature type="chain" id="PRO_0000028551" description="Angiotensin-converting enzyme">
    <location>
        <begin position="34"/>
        <end position="1310"/>
    </location>
</feature>
<feature type="chain" id="PRO_0000028552" description="Angiotensin-converting enzyme, soluble form" evidence="19">
    <location>
        <begin position="34"/>
        <end position="1236"/>
    </location>
</feature>
<feature type="topological domain" description="Extracellular" evidence="3">
    <location>
        <begin position="34"/>
        <end position="1260"/>
    </location>
</feature>
<feature type="transmembrane region" description="Helical" evidence="3">
    <location>
        <begin position="1261"/>
        <end position="1281"/>
    </location>
</feature>
<feature type="topological domain" description="Cytoplasmic" evidence="3">
    <location>
        <begin position="1282"/>
        <end position="1310"/>
    </location>
</feature>
<feature type="domain" description="Peptidase M2 1" evidence="4">
    <location>
        <begin position="45"/>
        <end position="628"/>
    </location>
</feature>
<feature type="domain" description="Peptidase M2 2" evidence="4">
    <location>
        <begin position="647"/>
        <end position="1226"/>
    </location>
</feature>
<feature type="region of interest" description="Juxtamembrane stalk" evidence="2">
    <location>
        <begin position="1219"/>
        <end position="1260"/>
    </location>
</feature>
<feature type="active site" description="Proton acceptor 1" evidence="4">
    <location>
        <position position="396"/>
    </location>
</feature>
<feature type="active site" description="Proton donor 1" evidence="4">
    <location>
        <position position="524"/>
    </location>
</feature>
<feature type="active site" description="Proton acceptor 2" evidence="4">
    <location>
        <position position="993"/>
    </location>
</feature>
<feature type="active site" description="Proton donor 2" evidence="4">
    <location>
        <position position="1122"/>
    </location>
</feature>
<feature type="binding site" evidence="4">
    <location>
        <position position="236"/>
    </location>
    <ligand>
        <name>chloride</name>
        <dbReference type="ChEBI" id="CHEBI:17996"/>
        <label>1</label>
    </ligand>
</feature>
<feature type="binding site" evidence="4">
    <location>
        <position position="395"/>
    </location>
    <ligand>
        <name>Zn(2+)</name>
        <dbReference type="ChEBI" id="CHEBI:29105"/>
        <label>1</label>
        <note>catalytic</note>
    </ligand>
</feature>
<feature type="binding site" evidence="4">
    <location>
        <position position="399"/>
    </location>
    <ligand>
        <name>Zn(2+)</name>
        <dbReference type="ChEBI" id="CHEBI:29105"/>
        <label>1</label>
        <note>catalytic</note>
    </ligand>
</feature>
<feature type="binding site" evidence="4">
    <location>
        <position position="422"/>
    </location>
    <ligand>
        <name>Zn(2+)</name>
        <dbReference type="ChEBI" id="CHEBI:29105"/>
        <label>1</label>
        <note>catalytic</note>
    </ligand>
</feature>
<feature type="binding site" evidence="4">
    <location>
        <position position="533"/>
    </location>
    <ligand>
        <name>chloride</name>
        <dbReference type="ChEBI" id="CHEBI:17996"/>
        <label>1</label>
    </ligand>
</feature>
<feature type="binding site" evidence="4">
    <location>
        <position position="795"/>
    </location>
    <ligand>
        <name>chloride</name>
        <dbReference type="ChEBI" id="CHEBI:17996"/>
        <label>2</label>
    </ligand>
</feature>
<feature type="binding site" evidence="4">
    <location>
        <position position="833"/>
    </location>
    <ligand>
        <name>chloride</name>
        <dbReference type="ChEBI" id="CHEBI:17996"/>
        <label>3</label>
    </ligand>
</feature>
<feature type="binding site" evidence="4">
    <location>
        <position position="992"/>
    </location>
    <ligand>
        <name>Zn(2+)</name>
        <dbReference type="ChEBI" id="CHEBI:29105"/>
        <label>2</label>
        <note>catalytic</note>
    </ligand>
</feature>
<feature type="binding site" evidence="4">
    <location>
        <position position="996"/>
    </location>
    <ligand>
        <name>Zn(2+)</name>
        <dbReference type="ChEBI" id="CHEBI:29105"/>
        <label>2</label>
        <note>catalytic</note>
    </ligand>
</feature>
<feature type="binding site" evidence="4">
    <location>
        <position position="1020"/>
    </location>
    <ligand>
        <name>Zn(2+)</name>
        <dbReference type="ChEBI" id="CHEBI:29105"/>
        <label>2</label>
        <note>catalytic</note>
    </ligand>
</feature>
<feature type="binding site" evidence="4">
    <location>
        <position position="1094"/>
    </location>
    <ligand>
        <name>chloride</name>
        <dbReference type="ChEBI" id="CHEBI:17996"/>
        <label>2</label>
    </ligand>
</feature>
<feature type="binding site" evidence="4">
    <location>
        <position position="1098"/>
    </location>
    <ligand>
        <name>chloride</name>
        <dbReference type="ChEBI" id="CHEBI:17996"/>
        <label>2</label>
    </ligand>
</feature>
<feature type="binding site" evidence="4">
    <location>
        <position position="1131"/>
    </location>
    <ligand>
        <name>chloride</name>
        <dbReference type="ChEBI" id="CHEBI:17996"/>
        <label>3</label>
    </ligand>
</feature>
<feature type="site" description="Cleavage" evidence="6 15">
    <location>
        <begin position="1236"/>
        <end position="1237"/>
    </location>
</feature>
<feature type="modified residue" description="Phosphoserine" evidence="6">
    <location>
        <position position="1303"/>
    </location>
</feature>
<feature type="glycosylation site" description="N-linked (GlcNAc...) asparagine" evidence="3">
    <location>
        <position position="59"/>
    </location>
</feature>
<feature type="glycosylation site" description="N-linked (GlcNAc...) asparagine" evidence="3">
    <location>
        <position position="79"/>
    </location>
</feature>
<feature type="glycosylation site" description="N-linked (GlcNAc...) asparagine" evidence="3">
    <location>
        <position position="151"/>
    </location>
</feature>
<feature type="glycosylation site" description="N-linked (GlcNAc...) asparagine" evidence="3">
    <location>
        <position position="323"/>
    </location>
</feature>
<feature type="glycosylation site" description="N-linked (GlcNAc...) asparagine" evidence="3">
    <location>
        <position position="449"/>
    </location>
</feature>
<feature type="glycosylation site" description="N-linked (GlcNAc...) asparagine" evidence="3">
    <location>
        <position position="513"/>
    </location>
</feature>
<feature type="glycosylation site" description="N-linked (GlcNAc...) asparagine" evidence="3">
    <location>
        <position position="681"/>
    </location>
</feature>
<feature type="glycosylation site" description="N-linked (GlcNAc...) asparagine" evidence="3">
    <location>
        <position position="699"/>
    </location>
</feature>
<feature type="glycosylation site" description="N-linked (GlcNAc...) asparagine" evidence="3">
    <location>
        <position position="718"/>
    </location>
</feature>
<feature type="glycosylation site" description="N-linked (GlcNAc...) asparagine" evidence="3">
    <location>
        <position position="946"/>
    </location>
</feature>
<feature type="glycosylation site" description="N-linked (GlcNAc...) asparagine" evidence="3">
    <location>
        <position position="1195"/>
    </location>
</feature>
<feature type="disulfide bond" evidence="4">
    <location>
        <begin position="162"/>
        <end position="170"/>
    </location>
</feature>
<feature type="disulfide bond" evidence="4">
    <location>
        <begin position="364"/>
        <end position="382"/>
    </location>
</feature>
<feature type="disulfide bond" evidence="4">
    <location>
        <begin position="549"/>
        <end position="561"/>
    </location>
</feature>
<feature type="disulfide bond" evidence="4">
    <location>
        <begin position="761"/>
        <end position="767"/>
    </location>
</feature>
<feature type="disulfide bond" evidence="4">
    <location>
        <begin position="961"/>
        <end position="979"/>
    </location>
</feature>
<feature type="disulfide bond" evidence="4">
    <location>
        <begin position="1147"/>
        <end position="1159"/>
    </location>
</feature>
<feature type="splice variant" id="VSP_037644" description="In isoform Testis-specific." evidence="17">
    <location>
        <begin position="1"/>
        <end position="573"/>
    </location>
</feature>
<feature type="splice variant" id="VSP_037645" description="In isoform Testis-specific." evidence="17">
    <original>RAVLQAGCSRPWQEVLKDMVASDALDAQPLLDYFQPVTQWLQEQNERNGEVLGWPEYQWRPPLPNNYPEGID</original>
    <variation>MGQGWAAPGLPSLLLLLLCCGHSLLVPSRVAARRVTVNQGTTSQATTTSKATTSIRATTHQTTAHQTTQSPN</variation>
    <location>
        <begin position="574"/>
        <end position="645"/>
    </location>
</feature>
<feature type="mutagenesis site" description="No effect on activity. 20-fold reduction in catalytic efficiency; when associated with F-809." evidence="13">
    <original>K</original>
    <variation>E</variation>
    <location>
        <position position="727"/>
    </location>
</feature>
<feature type="mutagenesis site" description="No effect on activity. 20-fold reduction in catalytic efficiency; when associated with E-727." evidence="13">
    <original>Y</original>
    <variation>F</variation>
    <location>
        <position position="809"/>
    </location>
</feature>
<feature type="mutagenesis site" description="Abolished phosphorylation without affecting calmodulin-binding." evidence="6">
    <original>S</original>
    <variation>A</variation>
    <location>
        <position position="1303"/>
    </location>
</feature>
<feature type="mutagenesis site" description="Mimics phosphorylation; does not affect calmodulin-binding." evidence="6">
    <original>S</original>
    <variation>D</variation>
    <location>
        <position position="1303"/>
    </location>
</feature>
<feature type="sequence conflict" description="In Ref. 6; AA sequence." evidence="18" ref="6">
    <original>E</original>
    <variation>N</variation>
    <location>
        <position position="48"/>
    </location>
</feature>
<dbReference type="EC" id="3.4.15.1" evidence="13"/>
<dbReference type="EMBL" id="X62551">
    <property type="protein sequence ID" value="CAA44428.1"/>
    <property type="molecule type" value="mRNA"/>
</dbReference>
<dbReference type="EMBL" id="J05041">
    <property type="protein sequence ID" value="AAA31153.1"/>
    <property type="molecule type" value="mRNA"/>
</dbReference>
<dbReference type="EMBL" id="M58579">
    <property type="protein sequence ID" value="AAA31151.1"/>
    <property type="status" value="ALT_SEQ"/>
    <property type="molecule type" value="Genomic_DNA"/>
</dbReference>
<dbReference type="EMBL" id="M58580">
    <property type="protein sequence ID" value="AAA31152.1"/>
    <property type="molecule type" value="Genomic_DNA"/>
</dbReference>
<dbReference type="PIR" id="A34402">
    <property type="entry name" value="A34402"/>
</dbReference>
<dbReference type="PIR" id="S35484">
    <property type="entry name" value="S35484"/>
</dbReference>
<dbReference type="RefSeq" id="NP_001075864.1">
    <molecule id="P12822-1"/>
    <property type="nucleotide sequence ID" value="NM_001082395.1"/>
</dbReference>
<dbReference type="RefSeq" id="NP_001164540.1">
    <molecule id="P12822-2"/>
    <property type="nucleotide sequence ID" value="NM_001171069.1"/>
</dbReference>
<dbReference type="SMR" id="P12822"/>
<dbReference type="FunCoup" id="P12822">
    <property type="interactions" value="44"/>
</dbReference>
<dbReference type="STRING" id="9986.ENSOCUP00000022251"/>
<dbReference type="BindingDB" id="P12822"/>
<dbReference type="ChEMBL" id="CHEMBL4074"/>
<dbReference type="DrugCentral" id="P12822"/>
<dbReference type="MEROPS" id="M02.001"/>
<dbReference type="MEROPS" id="M02.004"/>
<dbReference type="GlyCosmos" id="P12822">
    <property type="glycosylation" value="11 sites, No reported glycans"/>
</dbReference>
<dbReference type="iPTMnet" id="P12822"/>
<dbReference type="PaxDb" id="9986-ENSOCUP00000022251"/>
<dbReference type="GeneID" id="100009274"/>
<dbReference type="KEGG" id="ocu:100009274"/>
<dbReference type="CTD" id="1636"/>
<dbReference type="eggNOG" id="KOG3690">
    <property type="taxonomic scope" value="Eukaryota"/>
</dbReference>
<dbReference type="InParanoid" id="P12822"/>
<dbReference type="OrthoDB" id="10029630at2759"/>
<dbReference type="BRENDA" id="3.4.15.1">
    <property type="organism ID" value="1749"/>
</dbReference>
<dbReference type="SABIO-RK" id="P12822"/>
<dbReference type="Proteomes" id="UP000001811">
    <property type="component" value="Unplaced"/>
</dbReference>
<dbReference type="GO" id="GO:0005737">
    <property type="term" value="C:cytoplasm"/>
    <property type="evidence" value="ECO:0007669"/>
    <property type="project" value="UniProtKB-SubCell"/>
</dbReference>
<dbReference type="GO" id="GO:0005576">
    <property type="term" value="C:extracellular region"/>
    <property type="evidence" value="ECO:0007669"/>
    <property type="project" value="UniProtKB-SubCell"/>
</dbReference>
<dbReference type="GO" id="GO:0005615">
    <property type="term" value="C:extracellular space"/>
    <property type="evidence" value="ECO:0000250"/>
    <property type="project" value="UniProtKB"/>
</dbReference>
<dbReference type="GO" id="GO:0005886">
    <property type="term" value="C:plasma membrane"/>
    <property type="evidence" value="ECO:0000250"/>
    <property type="project" value="UniProtKB"/>
</dbReference>
<dbReference type="GO" id="GO:0005516">
    <property type="term" value="F:calmodulin binding"/>
    <property type="evidence" value="ECO:0007669"/>
    <property type="project" value="UniProtKB-KW"/>
</dbReference>
<dbReference type="GO" id="GO:0004180">
    <property type="term" value="F:carboxypeptidase activity"/>
    <property type="evidence" value="ECO:0007669"/>
    <property type="project" value="UniProtKB-KW"/>
</dbReference>
<dbReference type="GO" id="GO:0031404">
    <property type="term" value="F:chloride ion binding"/>
    <property type="evidence" value="ECO:0000250"/>
    <property type="project" value="UniProtKB"/>
</dbReference>
<dbReference type="GO" id="GO:0046872">
    <property type="term" value="F:metal ion binding"/>
    <property type="evidence" value="ECO:0007669"/>
    <property type="project" value="UniProtKB-KW"/>
</dbReference>
<dbReference type="GO" id="GO:0070573">
    <property type="term" value="F:metallodipeptidase activity"/>
    <property type="evidence" value="ECO:0000250"/>
    <property type="project" value="UniProtKB"/>
</dbReference>
<dbReference type="GO" id="GO:0004222">
    <property type="term" value="F:metalloendopeptidase activity"/>
    <property type="evidence" value="ECO:0000250"/>
    <property type="project" value="UniProtKB"/>
</dbReference>
<dbReference type="GO" id="GO:0008233">
    <property type="term" value="F:peptidase activity"/>
    <property type="evidence" value="ECO:0000314"/>
    <property type="project" value="UniProtKB"/>
</dbReference>
<dbReference type="GO" id="GO:0008241">
    <property type="term" value="F:peptidyl-dipeptidase activity"/>
    <property type="evidence" value="ECO:0000250"/>
    <property type="project" value="UniProtKB"/>
</dbReference>
<dbReference type="GO" id="GO:0002003">
    <property type="term" value="P:angiotensin maturation"/>
    <property type="evidence" value="ECO:0000250"/>
    <property type="project" value="UniProtKB"/>
</dbReference>
<dbReference type="GO" id="GO:0010815">
    <property type="term" value="P:bradykinin catabolic process"/>
    <property type="evidence" value="ECO:0000250"/>
    <property type="project" value="UniProtKB"/>
</dbReference>
<dbReference type="GO" id="GO:0042447">
    <property type="term" value="P:hormone catabolic process"/>
    <property type="evidence" value="ECO:0000250"/>
    <property type="project" value="UniProtKB"/>
</dbReference>
<dbReference type="GO" id="GO:0042445">
    <property type="term" value="P:hormone metabolic process"/>
    <property type="evidence" value="ECO:0000314"/>
    <property type="project" value="UniProtKB"/>
</dbReference>
<dbReference type="GO" id="GO:0001822">
    <property type="term" value="P:kidney development"/>
    <property type="evidence" value="ECO:0000250"/>
    <property type="project" value="UniProtKB"/>
</dbReference>
<dbReference type="GO" id="GO:0003084">
    <property type="term" value="P:positive regulation of systemic arterial blood pressure"/>
    <property type="evidence" value="ECO:0007669"/>
    <property type="project" value="TreeGrafter"/>
</dbReference>
<dbReference type="GO" id="GO:0008217">
    <property type="term" value="P:regulation of blood pressure"/>
    <property type="evidence" value="ECO:0000250"/>
    <property type="project" value="UniProtKB"/>
</dbReference>
<dbReference type="GO" id="GO:0048167">
    <property type="term" value="P:regulation of synaptic plasticity"/>
    <property type="evidence" value="ECO:0000250"/>
    <property type="project" value="UniProtKB"/>
</dbReference>
<dbReference type="GO" id="GO:0010814">
    <property type="term" value="P:substance P catabolic process"/>
    <property type="evidence" value="ECO:0000250"/>
    <property type="project" value="UniProtKB"/>
</dbReference>
<dbReference type="CDD" id="cd06461">
    <property type="entry name" value="M2_ACE"/>
    <property type="match status" value="2"/>
</dbReference>
<dbReference type="FunFam" id="1.10.1370.30:FF:000004">
    <property type="entry name" value="Angiotensin-converting enzyme"/>
    <property type="match status" value="2"/>
</dbReference>
<dbReference type="Gene3D" id="1.10.1370.30">
    <property type="match status" value="1"/>
</dbReference>
<dbReference type="InterPro" id="IPR001548">
    <property type="entry name" value="Peptidase_M2"/>
</dbReference>
<dbReference type="PANTHER" id="PTHR10514">
    <property type="entry name" value="ANGIOTENSIN-CONVERTING ENZYME"/>
    <property type="match status" value="1"/>
</dbReference>
<dbReference type="PANTHER" id="PTHR10514:SF25">
    <property type="entry name" value="ANGIOTENSIN-CONVERTING ENZYME"/>
    <property type="match status" value="1"/>
</dbReference>
<dbReference type="Pfam" id="PF01401">
    <property type="entry name" value="Peptidase_M2"/>
    <property type="match status" value="2"/>
</dbReference>
<dbReference type="PRINTS" id="PR00791">
    <property type="entry name" value="PEPDIPTASEA"/>
</dbReference>
<dbReference type="SUPFAM" id="SSF55486">
    <property type="entry name" value="Metalloproteases ('zincins'), catalytic domain"/>
    <property type="match status" value="2"/>
</dbReference>
<dbReference type="PROSITE" id="PS52011">
    <property type="entry name" value="PEPTIDASE_M2"/>
    <property type="match status" value="2"/>
</dbReference>
<dbReference type="PROSITE" id="PS00142">
    <property type="entry name" value="ZINC_PROTEASE"/>
    <property type="match status" value="2"/>
</dbReference>
<evidence type="ECO:0000250" key="1">
    <source>
        <dbReference type="UniProtKB" id="P09470"/>
    </source>
</evidence>
<evidence type="ECO:0000250" key="2">
    <source>
        <dbReference type="UniProtKB" id="P12821"/>
    </source>
</evidence>
<evidence type="ECO:0000255" key="3"/>
<evidence type="ECO:0000255" key="4">
    <source>
        <dbReference type="PROSITE-ProRule" id="PRU01355"/>
    </source>
</evidence>
<evidence type="ECO:0000269" key="5">
    <source>
    </source>
</evidence>
<evidence type="ECO:0000269" key="6">
    <source>
    </source>
</evidence>
<evidence type="ECO:0000269" key="7">
    <source>
    </source>
</evidence>
<evidence type="ECO:0000269" key="8">
    <source>
    </source>
</evidence>
<evidence type="ECO:0000269" key="9">
    <source>
    </source>
</evidence>
<evidence type="ECO:0000269" key="10">
    <source>
    </source>
</evidence>
<evidence type="ECO:0000269" key="11">
    <source>
    </source>
</evidence>
<evidence type="ECO:0000269" key="12">
    <source>
    </source>
</evidence>
<evidence type="ECO:0000269" key="13">
    <source>
    </source>
</evidence>
<evidence type="ECO:0000269" key="14">
    <source>
    </source>
</evidence>
<evidence type="ECO:0000269" key="15">
    <source>
    </source>
</evidence>
<evidence type="ECO:0000303" key="16">
    <source>
    </source>
</evidence>
<evidence type="ECO:0000303" key="17">
    <source>
    </source>
</evidence>
<evidence type="ECO:0000305" key="18"/>
<evidence type="ECO:0000305" key="19">
    <source>
    </source>
</evidence>
<name>ACE_RABIT</name>
<protein>
    <recommendedName>
        <fullName evidence="16">Angiotensin-converting enzyme</fullName>
        <shortName evidence="16">ACE</shortName>
        <ecNumber evidence="13">3.4.15.1</ecNumber>
    </recommendedName>
    <alternativeName>
        <fullName>Dipeptidyl carboxypeptidase I</fullName>
    </alternativeName>
    <alternativeName>
        <fullName evidence="2">Kininase II</fullName>
    </alternativeName>
    <cdAntigenName>CD143</cdAntigenName>
    <component>
        <recommendedName>
            <fullName evidence="19">Angiotensin-converting enzyme, soluble form</fullName>
        </recommendedName>
    </component>
</protein>
<comment type="function">
    <text evidence="1 2 10 13 14">Dipeptidyl carboxypeptidase that removes dipeptides from the C-terminus of a variety of circulating hormones, such as angiotensin I, bradykinin or enkephalins, thereby playing a key role in the regulation of blood pressure, electrolyte homeostasis or synaptic plasticity (PubMed:7902354, PubMed:8171037). Composed of two similar catalytic domains, each possessing a functional active site, with different selectivity for substrates (By similarity). Plays a major role in the angiotensin-renin system that regulates blood pressure and sodium retention by the kidney by converting angiotensin I to angiotensin II, resulting in an increase of the vasoconstrictor activity of angiotensin (PubMed:7902354). Also able to inactivate bradykinin, a potent vasodilator, and therefore enhance the blood pressure response (By similarity). Acts as a regulator of synaptic transmission by mediating cleavage of neuropeptide hormones, such as substance P, neurotensin or enkephalins (By similarity). Catalyzes degradation of different enkephalin neuropeptides (Met-enkephalin, Leu-enkephalin, Met-enkephalin-Arg-Phe and possibly Met-enkephalin-Arg-Gly-Leu) (By similarity). Acts as a regulator of synaptic plasticity in the nucleus accumbens of the brain by mediating cleavage of Met-enkephalin-Arg-Phe, a strong ligand of Mu-type opioid receptor OPRM1, into Met-enkephalin (By similarity). Met-enkephalin-Arg-Phe cleavage by ACE decreases activation of OPRM1, leading to long-term synaptic potentiation of glutamate release (By similarity). Also acts as a regulator of hematopoietic stem cell differentiation by mediating degradation of hemoregulatory peptide N-acetyl-SDKP (AcSDKP) (By similarity). Acts as a regulator of cannabinoid signaling pathway by mediating degradation of hemopressin, an antagonist peptide of the cannabinoid receptor CNR1 (By similarity). Involved in amyloid-beta metabolism by catalyzing degradation of Amyloid-beta protein 40 and Amyloid-beta protein 42 peptides, thereby preventing plaque formation (By similarity). Catalyzes cleavage of cholecystokinin (maturation of Cholecystokinin-8 and Cholecystokinin-5) and Gonadoliberin-1 (both maturation and degradation) hormones (PubMed:2554881). Degradation of hemoregulatory peptide N-acetyl-SDKP (AcSDKP) and amyloid-beta proteins is mediated by the N-terminal catalytic domain, while angiotensin I and cholecystokinin cleavage is mediated by the C-terminal catalytic region (By similarity).</text>
</comment>
<comment type="function">
    <molecule>Angiotensin-converting enzyme, soluble form</molecule>
    <text evidence="2">Soluble form that is released in blood plasma and other body fluids following proteolytic cleavage in the juxtamembrane stalk region.</text>
</comment>
<comment type="function">
    <molecule>Isoform Testis-specific</molecule>
    <text evidence="1 2 7 13">Isoform produced by alternative promoter usage that is specifically expressed in spermatocytes and adult testis, and which is required for male fertility (By similarity). In contrast to somatic isoforms, only contains one catalytic domain (By similarity). Acts as a dipeptidyl carboxypeptidase that removes dipeptides from the C-terminus of substrates (PubMed:7902354). The identity of substrates that are needed for male fertility is unknown (By similarity). May also have a glycosidase activity which releases GPI-anchored proteins from the membrane by cleaving the mannose linkage in the GPI moiety (By similarity). The GPIase activity was reported to be essential for the egg-binding ability of the sperm (By similarity). This activity is however unclear and has been challenged by other groups, suggesting that it may be indirect (PubMed:16270062).</text>
</comment>
<comment type="catalytic activity">
    <reaction evidence="13">
        <text>Release of a C-terminal dipeptide, oligopeptide-|-Xaa-Yaa, when Xaa is not Pro, and Yaa is neither Asp nor Glu. Thus, conversion of angiotensin I to angiotensin II, with increase in vasoconstrictor activity, but no action on angiotensin II.</text>
        <dbReference type="EC" id="3.4.15.1"/>
    </reaction>
</comment>
<comment type="catalytic activity">
    <reaction evidence="13">
        <text>angiotensin I + H2O = L-histidyl-L-leucine + angiotensin II</text>
        <dbReference type="Rhea" id="RHEA:63560"/>
        <dbReference type="ChEBI" id="CHEBI:15377"/>
        <dbReference type="ChEBI" id="CHEBI:58506"/>
        <dbReference type="ChEBI" id="CHEBI:147350"/>
        <dbReference type="ChEBI" id="CHEBI:147392"/>
        <dbReference type="EC" id="3.4.15.1"/>
    </reaction>
    <physiologicalReaction direction="left-to-right" evidence="13">
        <dbReference type="Rhea" id="RHEA:63561"/>
    </physiologicalReaction>
</comment>
<comment type="catalytic activity">
    <reaction evidence="2">
        <text>bradykinin + H2O = L-Phe-L-Arg + bradykinin(1-7)</text>
        <dbReference type="Rhea" id="RHEA:71451"/>
        <dbReference type="ChEBI" id="CHEBI:15377"/>
        <dbReference type="ChEBI" id="CHEBI:132988"/>
        <dbReference type="ChEBI" id="CHEBI:133147"/>
        <dbReference type="ChEBI" id="CHEBI:147352"/>
    </reaction>
    <physiologicalReaction direction="left-to-right" evidence="2">
        <dbReference type="Rhea" id="RHEA:71452"/>
    </physiologicalReaction>
</comment>
<comment type="catalytic activity">
    <reaction evidence="2">
        <text>substance P + H2O = substance P(1-9) + L-Leu-L-Met-NH2</text>
        <dbReference type="Rhea" id="RHEA:71459"/>
        <dbReference type="ChEBI" id="CHEBI:15377"/>
        <dbReference type="ChEBI" id="CHEBI:190692"/>
        <dbReference type="ChEBI" id="CHEBI:190693"/>
        <dbReference type="ChEBI" id="CHEBI:190700"/>
    </reaction>
    <physiologicalReaction direction="left-to-right" evidence="2">
        <dbReference type="Rhea" id="RHEA:71460"/>
    </physiologicalReaction>
</comment>
<comment type="catalytic activity">
    <reaction evidence="2">
        <text>substance P + H2O = substance P(1-8) + Gly-L-Leu-L-Met-NH2</text>
        <dbReference type="Rhea" id="RHEA:71463"/>
        <dbReference type="ChEBI" id="CHEBI:15377"/>
        <dbReference type="ChEBI" id="CHEBI:190692"/>
        <dbReference type="ChEBI" id="CHEBI:190694"/>
        <dbReference type="ChEBI" id="CHEBI:190699"/>
    </reaction>
    <physiologicalReaction direction="left-to-right" evidence="2">
        <dbReference type="Rhea" id="RHEA:71464"/>
    </physiologicalReaction>
</comment>
<comment type="catalytic activity">
    <reaction evidence="2">
        <text>substance P + H2O = L-Phe-L-Phe-Gly-L-Leu-L-Met-NH2 + substance P(1-6)</text>
        <dbReference type="Rhea" id="RHEA:71471"/>
        <dbReference type="ChEBI" id="CHEBI:15377"/>
        <dbReference type="ChEBI" id="CHEBI:190692"/>
        <dbReference type="ChEBI" id="CHEBI:190696"/>
        <dbReference type="ChEBI" id="CHEBI:190697"/>
    </reaction>
    <physiologicalReaction direction="left-to-right" evidence="2">
        <dbReference type="Rhea" id="RHEA:71472"/>
    </physiologicalReaction>
</comment>
<comment type="catalytic activity">
    <reaction evidence="2">
        <text>neurotensin + H2O = neurotensin(1-11) + L-isoleucyl-L-leucine</text>
        <dbReference type="Rhea" id="RHEA:71475"/>
        <dbReference type="ChEBI" id="CHEBI:15377"/>
        <dbReference type="ChEBI" id="CHEBI:147362"/>
        <dbReference type="ChEBI" id="CHEBI:190704"/>
        <dbReference type="ChEBI" id="CHEBI:190706"/>
    </reaction>
    <physiologicalReaction direction="left-to-right" evidence="2">
        <dbReference type="Rhea" id="RHEA:71476"/>
    </physiologicalReaction>
</comment>
<comment type="catalytic activity">
    <reaction evidence="2">
        <text>goralatide + H2O = N-acetyl-L-seryl-L-aspartate + L-lysyl-L-proline</text>
        <dbReference type="Rhea" id="RHEA:71455"/>
        <dbReference type="ChEBI" id="CHEBI:15377"/>
        <dbReference type="ChEBI" id="CHEBI:190701"/>
        <dbReference type="ChEBI" id="CHEBI:190702"/>
        <dbReference type="ChEBI" id="CHEBI:190703"/>
    </reaction>
    <physiologicalReaction direction="left-to-right" evidence="2">
        <dbReference type="Rhea" id="RHEA:71456"/>
    </physiologicalReaction>
</comment>
<comment type="catalytic activity">
    <reaction evidence="2">
        <text>Met-enkephalin + H2O = L-phenylalanyl-L-methionine + L-tyrosylglycylglycine</text>
        <dbReference type="Rhea" id="RHEA:71483"/>
        <dbReference type="ChEBI" id="CHEBI:15377"/>
        <dbReference type="ChEBI" id="CHEBI:189868"/>
        <dbReference type="ChEBI" id="CHEBI:190708"/>
        <dbReference type="ChEBI" id="CHEBI:190709"/>
    </reaction>
    <physiologicalReaction direction="left-to-right" evidence="2">
        <dbReference type="Rhea" id="RHEA:71484"/>
    </physiologicalReaction>
</comment>
<comment type="catalytic activity">
    <reaction evidence="2">
        <text>Leu-enkephalin + H2O = L-tyrosylglycylglycine + L-phenylalanyl-L-leucine</text>
        <dbReference type="Rhea" id="RHEA:71487"/>
        <dbReference type="ChEBI" id="CHEBI:15377"/>
        <dbReference type="ChEBI" id="CHEBI:190689"/>
        <dbReference type="ChEBI" id="CHEBI:190708"/>
        <dbReference type="ChEBI" id="CHEBI:190710"/>
    </reaction>
    <physiologicalReaction direction="left-to-right" evidence="2">
        <dbReference type="Rhea" id="RHEA:71488"/>
    </physiologicalReaction>
</comment>
<comment type="catalytic activity">
    <reaction evidence="1">
        <text>Met-enkephalin-Arg-Phe + H2O = L-arginyl-L-phenylalanine + Met-enkephalin</text>
        <dbReference type="Rhea" id="RHEA:70675"/>
        <dbReference type="ChEBI" id="CHEBI:15377"/>
        <dbReference type="ChEBI" id="CHEBI:189868"/>
        <dbReference type="ChEBI" id="CHEBI:189869"/>
        <dbReference type="ChEBI" id="CHEBI:189870"/>
    </reaction>
    <physiologicalReaction direction="left-to-right" evidence="1">
        <dbReference type="Rhea" id="RHEA:70676"/>
    </physiologicalReaction>
</comment>
<comment type="catalytic activity">
    <molecule>Isoform Testis-specific</molecule>
    <reaction evidence="13">
        <text>Release of a C-terminal dipeptide, oligopeptide-|-Xaa-Yaa, when Xaa is not Pro, and Yaa is neither Asp nor Glu. Thus, conversion of angiotensin I to angiotensin II, with increase in vasoconstrictor activity, but no action on angiotensin II.</text>
        <dbReference type="EC" id="3.4.15.1"/>
    </reaction>
</comment>
<comment type="cofactor">
    <cofactor evidence="2">
        <name>Zn(2+)</name>
        <dbReference type="ChEBI" id="CHEBI:29105"/>
    </cofactor>
    <text evidence="2">Binds 2 Zn(2+) ions per subunit.</text>
</comment>
<comment type="cofactor">
    <molecule>Isoform Testis-specific</molecule>
    <cofactor evidence="2">
        <name>Zn(2+)</name>
        <dbReference type="ChEBI" id="CHEBI:29105"/>
    </cofactor>
    <text evidence="2">Isoform Testis-specific only binds 1 Zn(2+) ion per subunit.</text>
</comment>
<comment type="cofactor">
    <cofactor evidence="2">
        <name>chloride</name>
        <dbReference type="ChEBI" id="CHEBI:17996"/>
    </cofactor>
    <text evidence="2">Binds 3 chloride ions per subunit.</text>
</comment>
<comment type="cofactor">
    <molecule>Isoform Testis-specific</molecule>
    <cofactor evidence="2">
        <name>chloride</name>
        <dbReference type="ChEBI" id="CHEBI:17996"/>
    </cofactor>
</comment>
<comment type="activity regulation">
    <text evidence="2 13 14">The dipeptidyl carboxypeptidase activity is strongly activated by chloride (By similarity). Specifically inhibited by lisinopril (PubMed:7902354). Inhibited by mixanpril, an orally-active drug used for the treatment of hypertension (PubMed:8171037).</text>
</comment>
<comment type="activity regulation">
    <molecule>Isoform Testis-specific</molecule>
    <text evidence="2">Strongly inhibited by lisinopril and captopril.</text>
</comment>
<comment type="biophysicochemical properties">
    <kinetics>
        <KM evidence="13">0.6 mM for Hip-His-Leu</KM>
        <KM evidence="13">0.09 mM for angiotensin I</KM>
    </kinetics>
</comment>
<comment type="subunit">
    <text evidence="2 6">Monomer and homodimer; homodimerizes following binding to an inhibitor (By similarity). Interacts with calmodulin (CALM1, CALM2 or CALM3); interaction takes place in the cytoplasmic region and regulates phosphorylation and proteolytic cleavage (PubMed:16096279).</text>
</comment>
<comment type="subcellular location">
    <subcellularLocation>
        <location evidence="2">Cell membrane</location>
        <topology evidence="3">Single-pass type I membrane protein</topology>
    </subcellularLocation>
    <subcellularLocation>
        <location evidence="1">Cytoplasm</location>
    </subcellularLocation>
    <text evidence="1">Detected in both cell membrane and cytoplasm in neurons.</text>
</comment>
<comment type="subcellular location">
    <molecule>Angiotensin-converting enzyme, soluble form</molecule>
    <subcellularLocation>
        <location evidence="5 6">Secreted</location>
    </subcellularLocation>
</comment>
<comment type="subcellular location">
    <molecule>Isoform Testis-specific</molecule>
    <subcellularLocation>
        <location evidence="2">Cell membrane</location>
        <topology evidence="3">Single-pass type I membrane protein</topology>
    </subcellularLocation>
    <subcellularLocation>
        <location evidence="2">Secreted</location>
    </subcellularLocation>
    <text evidence="2">The testis-specific isoform can be cleaved before the transmembrane region, releasing a soluble form.</text>
</comment>
<comment type="alternative products">
    <event type="alternative promoter"/>
    <isoform>
        <id>P12822-1</id>
        <name>Somatic</name>
        <sequence type="displayed"/>
    </isoform>
    <isoform>
        <id>P12822-2</id>
        <id>P22968-1</id>
        <name>Testis-specific</name>
        <name>ACE-T</name>
        <sequence type="described" ref="VSP_037644 VSP_037645"/>
    </isoform>
</comment>
<comment type="tissue specificity">
    <molecule>Isoform Testis-specific</molecule>
    <text evidence="9">Testis-specific isoform is expressed in spermatocytes, adult testis.</text>
</comment>
<comment type="PTM">
    <text evidence="8">N-glycosylated.</text>
</comment>
<comment type="PTM">
    <text evidence="2 5">Phosphorylated by CK2 on Ser-1303; which allows membrane retention (By similarity). Phosphorylated on tyrosine residues on its extracellular part, promoting cleavage by secretase enzymes and formation of the soluble form (Angiotensin-converting enzyme, soluble form) (PubMed:15252021).</text>
</comment>
<comment type="PTM">
    <molecule>Angiotensin-converting enzyme, soluble form</molecule>
    <text evidence="2 5 6">Produced following proteolytic cleavage by secretase enzymes that cleave the transmembrane form in the juxtamembrane stalk region upstream of the transmembrane region (PubMed:15252021, PubMed:16096279). Cleavage can take place at different sites of the juxtamembrane stalk region (By similarity).</text>
</comment>
<comment type="similarity">
    <text evidence="18">Belongs to the peptidase M2 family.</text>
</comment>